<feature type="chain" id="PRO_0000114995" description="Transcription factor TOG1">
    <location>
        <begin position="1"/>
        <end position="794"/>
    </location>
</feature>
<feature type="DNA-binding region" description="Zn(2)-C6 fungal-type" evidence="2">
    <location>
        <begin position="18"/>
        <end position="44"/>
    </location>
</feature>
<feature type="binding site" evidence="1">
    <location>
        <position position="18"/>
    </location>
    <ligand>
        <name>Zn(2+)</name>
        <dbReference type="ChEBI" id="CHEBI:29105"/>
        <label>1</label>
    </ligand>
</feature>
<feature type="binding site" evidence="1">
    <location>
        <position position="18"/>
    </location>
    <ligand>
        <name>Zn(2+)</name>
        <dbReference type="ChEBI" id="CHEBI:29105"/>
        <label>2</label>
    </ligand>
</feature>
<feature type="binding site" evidence="1">
    <location>
        <position position="21"/>
    </location>
    <ligand>
        <name>Zn(2+)</name>
        <dbReference type="ChEBI" id="CHEBI:29105"/>
        <label>1</label>
    </ligand>
</feature>
<feature type="binding site" evidence="1">
    <location>
        <position position="28"/>
    </location>
    <ligand>
        <name>Zn(2+)</name>
        <dbReference type="ChEBI" id="CHEBI:29105"/>
        <label>1</label>
    </ligand>
</feature>
<feature type="binding site" evidence="1">
    <location>
        <position position="34"/>
    </location>
    <ligand>
        <name>Zn(2+)</name>
        <dbReference type="ChEBI" id="CHEBI:29105"/>
        <label>1</label>
    </ligand>
</feature>
<feature type="binding site" evidence="1">
    <location>
        <position position="34"/>
    </location>
    <ligand>
        <name>Zn(2+)</name>
        <dbReference type="ChEBI" id="CHEBI:29105"/>
        <label>2</label>
    </ligand>
</feature>
<feature type="binding site" evidence="1">
    <location>
        <position position="37"/>
    </location>
    <ligand>
        <name>Zn(2+)</name>
        <dbReference type="ChEBI" id="CHEBI:29105"/>
        <label>2</label>
    </ligand>
</feature>
<feature type="binding site" evidence="1">
    <location>
        <position position="44"/>
    </location>
    <ligand>
        <name>Zn(2+)</name>
        <dbReference type="ChEBI" id="CHEBI:29105"/>
        <label>2</label>
    </ligand>
</feature>
<reference key="1">
    <citation type="journal article" date="1997" name="Nature">
        <title>The nucleotide sequence of Saccharomyces cerevisiae chromosome V.</title>
        <authorList>
            <person name="Dietrich F.S."/>
            <person name="Mulligan J.T."/>
            <person name="Hennessy K.M."/>
            <person name="Yelton M.A."/>
            <person name="Allen E."/>
            <person name="Araujo R."/>
            <person name="Aviles E."/>
            <person name="Berno A."/>
            <person name="Brennan T."/>
            <person name="Carpenter J."/>
            <person name="Chen E."/>
            <person name="Cherry J.M."/>
            <person name="Chung E."/>
            <person name="Duncan M."/>
            <person name="Guzman E."/>
            <person name="Hartzell G."/>
            <person name="Hunicke-Smith S."/>
            <person name="Hyman R.W."/>
            <person name="Kayser A."/>
            <person name="Komp C."/>
            <person name="Lashkari D."/>
            <person name="Lew H."/>
            <person name="Lin D."/>
            <person name="Mosedale D."/>
            <person name="Nakahara K."/>
            <person name="Namath A."/>
            <person name="Norgren R."/>
            <person name="Oefner P."/>
            <person name="Oh C."/>
            <person name="Petel F.X."/>
            <person name="Roberts D."/>
            <person name="Sehl P."/>
            <person name="Schramm S."/>
            <person name="Shogren T."/>
            <person name="Smith V."/>
            <person name="Taylor P."/>
            <person name="Wei Y."/>
            <person name="Botstein D."/>
            <person name="Davis R.W."/>
        </authorList>
    </citation>
    <scope>NUCLEOTIDE SEQUENCE [LARGE SCALE GENOMIC DNA]</scope>
    <source>
        <strain>ATCC 204508 / S288c</strain>
    </source>
</reference>
<reference key="2">
    <citation type="journal article" date="2014" name="G3 (Bethesda)">
        <title>The reference genome sequence of Saccharomyces cerevisiae: Then and now.</title>
        <authorList>
            <person name="Engel S.R."/>
            <person name="Dietrich F.S."/>
            <person name="Fisk D.G."/>
            <person name="Binkley G."/>
            <person name="Balakrishnan R."/>
            <person name="Costanzo M.C."/>
            <person name="Dwight S.S."/>
            <person name="Hitz B.C."/>
            <person name="Karra K."/>
            <person name="Nash R.S."/>
            <person name="Weng S."/>
            <person name="Wong E.D."/>
            <person name="Lloyd P."/>
            <person name="Skrzypek M.S."/>
            <person name="Miyasato S.R."/>
            <person name="Simison M."/>
            <person name="Cherry J.M."/>
        </authorList>
    </citation>
    <scope>GENOME REANNOTATION</scope>
    <source>
        <strain>ATCC 204508 / S288c</strain>
    </source>
</reference>
<reference key="3">
    <citation type="journal article" date="2001" name="Nucleic Acids Res.">
        <title>Phenotypic analysis of genes encoding yeast zinc cluster proteins.</title>
        <authorList>
            <person name="Akache B."/>
            <person name="Wu K."/>
            <person name="Turcotte B."/>
        </authorList>
    </citation>
    <scope>FUNCTION</scope>
    <scope>DISRUPTION PHENOTYPE</scope>
</reference>
<reference key="4">
    <citation type="journal article" date="2014" name="Biochem. Biophys. Res. Commun.">
        <title>The novel zinc cluster regulator Tog1 plays important roles in oleate utilization and oxidative stress response in Saccharomyces cerevisiae.</title>
        <authorList>
            <person name="Thepnok P."/>
            <person name="Ratanakhanokchai K."/>
            <person name="Soontorngun N."/>
        </authorList>
    </citation>
    <scope>FUNCTION</scope>
    <scope>DISRUPTION PHENOTYPE</scope>
    <scope>SUBCELLULAR LOCATION</scope>
    <scope>DNA-BINDING</scope>
</reference>
<gene>
    <name evidence="5" type="primary">TOG1</name>
    <name type="ordered locus">YER184C</name>
</gene>
<comment type="function">
    <text evidence="3 4">Transcriptional activator required for growth on non-fermentable carbon sources and that regulates genes involved in fatty acid utilization (PubMed:11353088, PubMed:24998441). Acts as a direct activator that binds the promoters of oleate utilizing genes, encoded key enzymes in beta-oxidation and NADPH regeneration (POX1, FOX2,POT1 and IDP2), the glyoxylate shunt (MLS1 and ICL1), and gluconeogenesis (PCK1 and FBP1) (PubMed:24998441). Also regulates the abundance of peroxisomes that are vital for fatty acid oxidation (PubMed:24998441).</text>
</comment>
<comment type="subcellular location">
    <subcellularLocation>
        <location evidence="4">Nucleus</location>
    </subcellularLocation>
</comment>
<comment type="disruption phenotype">
    <text evidence="3 4">Confers sensitivity to calcofluor white, and prevents growth on non-fermentable carbon sources such as glycerol or lactate (PubMed:11353088, PubMed:24998441). Sensitizes cells to oxidative stress (PubMed:24998441). Leads to a decrease in peroxisome abundance when oleate was used as a sole carbon source (PubMed:24998441).</text>
</comment>
<evidence type="ECO:0000250" key="1"/>
<evidence type="ECO:0000255" key="2">
    <source>
        <dbReference type="PROSITE-ProRule" id="PRU00227"/>
    </source>
</evidence>
<evidence type="ECO:0000269" key="3">
    <source>
    </source>
</evidence>
<evidence type="ECO:0000269" key="4">
    <source>
    </source>
</evidence>
<evidence type="ECO:0000303" key="5">
    <source>
    </source>
</evidence>
<organism>
    <name type="scientific">Saccharomyces cerevisiae (strain ATCC 204508 / S288c)</name>
    <name type="common">Baker's yeast</name>
    <dbReference type="NCBI Taxonomy" id="559292"/>
    <lineage>
        <taxon>Eukaryota</taxon>
        <taxon>Fungi</taxon>
        <taxon>Dikarya</taxon>
        <taxon>Ascomycota</taxon>
        <taxon>Saccharomycotina</taxon>
        <taxon>Saccharomycetes</taxon>
        <taxon>Saccharomycetales</taxon>
        <taxon>Saccharomycetaceae</taxon>
        <taxon>Saccharomyces</taxon>
    </lineage>
</organism>
<dbReference type="EMBL" id="U18922">
    <property type="protein sequence ID" value="AAB64711.1"/>
    <property type="molecule type" value="Genomic_DNA"/>
</dbReference>
<dbReference type="EMBL" id="BK006939">
    <property type="protein sequence ID" value="DAA07847.1"/>
    <property type="molecule type" value="Genomic_DNA"/>
</dbReference>
<dbReference type="PIR" id="S50687">
    <property type="entry name" value="S50687"/>
</dbReference>
<dbReference type="RefSeq" id="NP_011111.1">
    <property type="nucleotide sequence ID" value="NM_001179074.1"/>
</dbReference>
<dbReference type="BioGRID" id="36938">
    <property type="interactions" value="24"/>
</dbReference>
<dbReference type="DIP" id="DIP-5488N"/>
<dbReference type="FunCoup" id="P39961">
    <property type="interactions" value="296"/>
</dbReference>
<dbReference type="IntAct" id="P39961">
    <property type="interactions" value="3"/>
</dbReference>
<dbReference type="MINT" id="P39961"/>
<dbReference type="STRING" id="4932.YER184C"/>
<dbReference type="GlyGen" id="P39961">
    <property type="glycosylation" value="2 sites, 1 O-linked glycan (2 sites)"/>
</dbReference>
<dbReference type="PaxDb" id="4932-YER184C"/>
<dbReference type="PeptideAtlas" id="P39961"/>
<dbReference type="EnsemblFungi" id="YER184C_mRNA">
    <property type="protein sequence ID" value="YER184C"/>
    <property type="gene ID" value="YER184C"/>
</dbReference>
<dbReference type="GeneID" id="856933"/>
<dbReference type="KEGG" id="sce:YER184C"/>
<dbReference type="AGR" id="SGD:S000000986"/>
<dbReference type="SGD" id="S000000986">
    <property type="gene designation" value="TOG1"/>
</dbReference>
<dbReference type="VEuPathDB" id="FungiDB:YER184C"/>
<dbReference type="eggNOG" id="ENOG502RYRF">
    <property type="taxonomic scope" value="Eukaryota"/>
</dbReference>
<dbReference type="GeneTree" id="ENSGT00940000176364"/>
<dbReference type="HOGENOM" id="CLU_023197_0_0_1"/>
<dbReference type="InParanoid" id="P39961"/>
<dbReference type="OMA" id="GLNRWEY"/>
<dbReference type="OrthoDB" id="5600212at2759"/>
<dbReference type="BioCyc" id="YEAST:G3O-30340-MONOMER"/>
<dbReference type="BioGRID-ORCS" id="856933">
    <property type="hits" value="0 hits in 13 CRISPR screens"/>
</dbReference>
<dbReference type="PRO" id="PR:P39961"/>
<dbReference type="Proteomes" id="UP000002311">
    <property type="component" value="Chromosome V"/>
</dbReference>
<dbReference type="RNAct" id="P39961">
    <property type="molecule type" value="protein"/>
</dbReference>
<dbReference type="GO" id="GO:0005634">
    <property type="term" value="C:nucleus"/>
    <property type="evidence" value="ECO:0007005"/>
    <property type="project" value="SGD"/>
</dbReference>
<dbReference type="GO" id="GO:0000981">
    <property type="term" value="F:DNA-binding transcription factor activity, RNA polymerase II-specific"/>
    <property type="evidence" value="ECO:0000318"/>
    <property type="project" value="GO_Central"/>
</dbReference>
<dbReference type="GO" id="GO:0043565">
    <property type="term" value="F:sequence-specific DNA binding"/>
    <property type="evidence" value="ECO:0000314"/>
    <property type="project" value="SGD"/>
</dbReference>
<dbReference type="GO" id="GO:0008270">
    <property type="term" value="F:zinc ion binding"/>
    <property type="evidence" value="ECO:0007669"/>
    <property type="project" value="InterPro"/>
</dbReference>
<dbReference type="GO" id="GO:0006351">
    <property type="term" value="P:DNA-templated transcription"/>
    <property type="evidence" value="ECO:0007669"/>
    <property type="project" value="InterPro"/>
</dbReference>
<dbReference type="GO" id="GO:0045944">
    <property type="term" value="P:positive regulation of transcription by RNA polymerase II"/>
    <property type="evidence" value="ECO:0000315"/>
    <property type="project" value="SGD"/>
</dbReference>
<dbReference type="CDD" id="cd12148">
    <property type="entry name" value="fungal_TF_MHR"/>
    <property type="match status" value="1"/>
</dbReference>
<dbReference type="CDD" id="cd00067">
    <property type="entry name" value="GAL4"/>
    <property type="match status" value="1"/>
</dbReference>
<dbReference type="Gene3D" id="4.10.240.10">
    <property type="entry name" value="Zn(2)-C6 fungal-type DNA-binding domain"/>
    <property type="match status" value="1"/>
</dbReference>
<dbReference type="InterPro" id="IPR050987">
    <property type="entry name" value="AtrR-like"/>
</dbReference>
<dbReference type="InterPro" id="IPR007219">
    <property type="entry name" value="Transcription_factor_dom_fun"/>
</dbReference>
<dbReference type="InterPro" id="IPR036864">
    <property type="entry name" value="Zn2-C6_fun-type_DNA-bd_sf"/>
</dbReference>
<dbReference type="InterPro" id="IPR001138">
    <property type="entry name" value="Zn2Cys6_DnaBD"/>
</dbReference>
<dbReference type="PANTHER" id="PTHR46910:SF3">
    <property type="entry name" value="HALOTOLERANCE PROTEIN 9-RELATED"/>
    <property type="match status" value="1"/>
</dbReference>
<dbReference type="PANTHER" id="PTHR46910">
    <property type="entry name" value="TRANSCRIPTION FACTOR PDR1"/>
    <property type="match status" value="1"/>
</dbReference>
<dbReference type="Pfam" id="PF04082">
    <property type="entry name" value="Fungal_trans"/>
    <property type="match status" value="1"/>
</dbReference>
<dbReference type="Pfam" id="PF00172">
    <property type="entry name" value="Zn_clus"/>
    <property type="match status" value="1"/>
</dbReference>
<dbReference type="SMART" id="SM00906">
    <property type="entry name" value="Fungal_trans"/>
    <property type="match status" value="1"/>
</dbReference>
<dbReference type="SMART" id="SM00066">
    <property type="entry name" value="GAL4"/>
    <property type="match status" value="1"/>
</dbReference>
<dbReference type="SUPFAM" id="SSF57701">
    <property type="entry name" value="Zn2/Cys6 DNA-binding domain"/>
    <property type="match status" value="1"/>
</dbReference>
<dbReference type="PROSITE" id="PS00463">
    <property type="entry name" value="ZN2_CY6_FUNGAL_1"/>
    <property type="match status" value="1"/>
</dbReference>
<dbReference type="PROSITE" id="PS50048">
    <property type="entry name" value="ZN2_CY6_FUNGAL_2"/>
    <property type="match status" value="1"/>
</dbReference>
<protein>
    <recommendedName>
        <fullName evidence="5">Transcription factor TOG1</fullName>
    </recommendedName>
    <alternativeName>
        <fullName evidence="5">Transcriptional regulator of oleate 1</fullName>
    </alternativeName>
</protein>
<proteinExistence type="evidence at protein level"/>
<sequence>MAAKRGLAKQKSRVTKACDRCHRKKIKCNSKKPCFGCIGSQSKCTYRNQFREPIEAFFNYTGSLSNDLDNAKCSIAKLKAQLPPSAPASLQKGLANICTELEKIQPQLYLNLDSKEISSYGGLKSIETEIIGKQSKSLNRFSNAFESNTAQNVSMYFGVYSPLLYFASTGISWITKKLISCSNDRETRETIYLFLKFLDASSASHAGPKVTSISPLEYYSKLNGLSCGNDVLIQHIMSNISNEIKGNTNINQTIKFNKPTDWFMYGVQLMEQHHKALDRKSSKKLLPLKYFLEQDELIFCLCLEYFERSLFSTMYDLTILKGLVSLMKHRYWIDDPFVLGRIISTMSRRSLDAGLNRWEYYIGQDEDTAEEYRKLWWDCYWWDRWYSLVTGKQPLIPHEMTSCLFPKDVVGLGVDDSMDCFTLINLVELDPSKFDICISFGYILLTKIITAVFSGLLYNRHFTDYRLFATPNAKDLNGTARQLMVEFSKICKIFQCIQDKLIPFLKQYSENSNVFELYTHFGFAKVCCFQGMESLILRIQNLLQERERIELDSCVKDIRLQTFEASVDILTDVLKHEDTFYIFRCSWFIYAILMNITLNFIETPRRNSICYLSLMCRMIASYNDLFVSSGNVNFKGNNAFSKKLENGTAVSFILTRICCQMYTRSQKMAKESLFCELKKYGQACSDAGQAALDIECIWYRNIIGEHKESSFRKEILSILDREMGDLVNNRVIGVQGKNQEGACYEKLSPSSTSVSVGMDFCSLENFVTAESLPDLLNLFWEDTEFGITKENLGE</sequence>
<accession>P39961</accession>
<accession>D3DM93</accession>
<keyword id="KW-0238">DNA-binding</keyword>
<keyword id="KW-0479">Metal-binding</keyword>
<keyword id="KW-0539">Nucleus</keyword>
<keyword id="KW-1185">Reference proteome</keyword>
<keyword id="KW-0804">Transcription</keyword>
<keyword id="KW-0805">Transcription regulation</keyword>
<keyword id="KW-0862">Zinc</keyword>
<name>TOG1_YEAST</name>